<evidence type="ECO:0000255" key="1">
    <source>
        <dbReference type="HAMAP-Rule" id="MF_00294"/>
    </source>
</evidence>
<feature type="chain" id="PRO_0000356693" description="Large ribosomal subunit protein bL33A">
    <location>
        <begin position="1"/>
        <end position="47"/>
    </location>
</feature>
<name>RL331_STAAT</name>
<protein>
    <recommendedName>
        <fullName evidence="1">Large ribosomal subunit protein bL33A</fullName>
    </recommendedName>
    <alternativeName>
        <fullName evidence="1">50S ribosomal protein L33 1</fullName>
    </alternativeName>
</protein>
<accession>A8YZN2</accession>
<dbReference type="EMBL" id="CP000730">
    <property type="protein sequence ID" value="ABX28554.1"/>
    <property type="molecule type" value="Genomic_DNA"/>
</dbReference>
<dbReference type="SMR" id="A8YZN2"/>
<dbReference type="KEGG" id="sax:USA300HOU_0528"/>
<dbReference type="HOGENOM" id="CLU_190949_0_1_9"/>
<dbReference type="GO" id="GO:0005737">
    <property type="term" value="C:cytoplasm"/>
    <property type="evidence" value="ECO:0007669"/>
    <property type="project" value="UniProtKB-ARBA"/>
</dbReference>
<dbReference type="GO" id="GO:1990904">
    <property type="term" value="C:ribonucleoprotein complex"/>
    <property type="evidence" value="ECO:0007669"/>
    <property type="project" value="UniProtKB-KW"/>
</dbReference>
<dbReference type="GO" id="GO:0005840">
    <property type="term" value="C:ribosome"/>
    <property type="evidence" value="ECO:0007669"/>
    <property type="project" value="UniProtKB-KW"/>
</dbReference>
<dbReference type="GO" id="GO:0003735">
    <property type="term" value="F:structural constituent of ribosome"/>
    <property type="evidence" value="ECO:0007669"/>
    <property type="project" value="InterPro"/>
</dbReference>
<dbReference type="GO" id="GO:0006412">
    <property type="term" value="P:translation"/>
    <property type="evidence" value="ECO:0007669"/>
    <property type="project" value="UniProtKB-UniRule"/>
</dbReference>
<dbReference type="Gene3D" id="2.20.28.120">
    <property type="entry name" value="Ribosomal protein L33"/>
    <property type="match status" value="1"/>
</dbReference>
<dbReference type="HAMAP" id="MF_00294">
    <property type="entry name" value="Ribosomal_bL33"/>
    <property type="match status" value="1"/>
</dbReference>
<dbReference type="InterPro" id="IPR001705">
    <property type="entry name" value="Ribosomal_bL33"/>
</dbReference>
<dbReference type="InterPro" id="IPR018264">
    <property type="entry name" value="Ribosomal_bL33_CS"/>
</dbReference>
<dbReference type="InterPro" id="IPR038584">
    <property type="entry name" value="Ribosomal_bL33_sf"/>
</dbReference>
<dbReference type="InterPro" id="IPR011332">
    <property type="entry name" value="Ribosomal_zn-bd"/>
</dbReference>
<dbReference type="NCBIfam" id="NF001764">
    <property type="entry name" value="PRK00504.1"/>
    <property type="match status" value="1"/>
</dbReference>
<dbReference type="NCBIfam" id="TIGR01023">
    <property type="entry name" value="rpmG_bact"/>
    <property type="match status" value="1"/>
</dbReference>
<dbReference type="Pfam" id="PF00471">
    <property type="entry name" value="Ribosomal_L33"/>
    <property type="match status" value="1"/>
</dbReference>
<dbReference type="SUPFAM" id="SSF57829">
    <property type="entry name" value="Zn-binding ribosomal proteins"/>
    <property type="match status" value="1"/>
</dbReference>
<dbReference type="PROSITE" id="PS00582">
    <property type="entry name" value="RIBOSOMAL_L33"/>
    <property type="match status" value="1"/>
</dbReference>
<gene>
    <name evidence="1" type="primary">rpmG1</name>
    <name type="ordered locus">USA300HOU_0528</name>
</gene>
<sequence length="47" mass="5375">MRKIPLNCEACGNRNYNVPKQEGSATRLTLKKYCPKCNAHTIHKESK</sequence>
<reference key="1">
    <citation type="journal article" date="2007" name="BMC Microbiol.">
        <title>Subtle genetic changes enhance virulence of methicillin resistant and sensitive Staphylococcus aureus.</title>
        <authorList>
            <person name="Highlander S.K."/>
            <person name="Hulten K.G."/>
            <person name="Qin X."/>
            <person name="Jiang H."/>
            <person name="Yerrapragada S."/>
            <person name="Mason E.O. Jr."/>
            <person name="Shang Y."/>
            <person name="Williams T.M."/>
            <person name="Fortunov R.M."/>
            <person name="Liu Y."/>
            <person name="Igboeli O."/>
            <person name="Petrosino J."/>
            <person name="Tirumalai M."/>
            <person name="Uzman A."/>
            <person name="Fox G.E."/>
            <person name="Cardenas A.M."/>
            <person name="Muzny D.M."/>
            <person name="Hemphill L."/>
            <person name="Ding Y."/>
            <person name="Dugan S."/>
            <person name="Blyth P.R."/>
            <person name="Buhay C.J."/>
            <person name="Dinh H.H."/>
            <person name="Hawes A.C."/>
            <person name="Holder M."/>
            <person name="Kovar C.L."/>
            <person name="Lee S.L."/>
            <person name="Liu W."/>
            <person name="Nazareth L.V."/>
            <person name="Wang Q."/>
            <person name="Zhou J."/>
            <person name="Kaplan S.L."/>
            <person name="Weinstock G.M."/>
        </authorList>
    </citation>
    <scope>NUCLEOTIDE SEQUENCE [LARGE SCALE GENOMIC DNA]</scope>
    <source>
        <strain>USA300 / TCH1516</strain>
    </source>
</reference>
<proteinExistence type="inferred from homology"/>
<keyword id="KW-0687">Ribonucleoprotein</keyword>
<keyword id="KW-0689">Ribosomal protein</keyword>
<comment type="similarity">
    <text evidence="1">Belongs to the bacterial ribosomal protein bL33 family.</text>
</comment>
<organism>
    <name type="scientific">Staphylococcus aureus (strain USA300 / TCH1516)</name>
    <dbReference type="NCBI Taxonomy" id="451516"/>
    <lineage>
        <taxon>Bacteria</taxon>
        <taxon>Bacillati</taxon>
        <taxon>Bacillota</taxon>
        <taxon>Bacilli</taxon>
        <taxon>Bacillales</taxon>
        <taxon>Staphylococcaceae</taxon>
        <taxon>Staphylococcus</taxon>
    </lineage>
</organism>